<comment type="function">
    <text evidence="3">Mediates the deactivation of rap1 during multicellular development and is required for normal morphogenesis. Also required for the correct patterning of specific subtypes of prestalk cells.</text>
</comment>
<comment type="developmental stage">
    <text evidence="3">Expressed constantly during multicellular development and is enriched in prestalk cells.</text>
</comment>
<comment type="disruption phenotype">
    <text evidence="3">Null cells have increased levels of active rap1, increased substrate adhesion, abnormal F-actin distribution, show defects in cell-cell and substrate adhesion during aggregation and vegetative growth.</text>
</comment>
<name>RGAPB_DICDI</name>
<proteinExistence type="evidence at transcript level"/>
<gene>
    <name type="primary">rapgapB</name>
    <name type="ORF">DDB_G0282247</name>
</gene>
<accession>Q54SS8</accession>
<reference key="1">
    <citation type="journal article" date="2005" name="Nature">
        <title>The genome of the social amoeba Dictyostelium discoideum.</title>
        <authorList>
            <person name="Eichinger L."/>
            <person name="Pachebat J.A."/>
            <person name="Gloeckner G."/>
            <person name="Rajandream M.A."/>
            <person name="Sucgang R."/>
            <person name="Berriman M."/>
            <person name="Song J."/>
            <person name="Olsen R."/>
            <person name="Szafranski K."/>
            <person name="Xu Q."/>
            <person name="Tunggal B."/>
            <person name="Kummerfeld S."/>
            <person name="Madera M."/>
            <person name="Konfortov B.A."/>
            <person name="Rivero F."/>
            <person name="Bankier A.T."/>
            <person name="Lehmann R."/>
            <person name="Hamlin N."/>
            <person name="Davies R."/>
            <person name="Gaudet P."/>
            <person name="Fey P."/>
            <person name="Pilcher K."/>
            <person name="Chen G."/>
            <person name="Saunders D."/>
            <person name="Sodergren E.J."/>
            <person name="Davis P."/>
            <person name="Kerhornou A."/>
            <person name="Nie X."/>
            <person name="Hall N."/>
            <person name="Anjard C."/>
            <person name="Hemphill L."/>
            <person name="Bason N."/>
            <person name="Farbrother P."/>
            <person name="Desany B."/>
            <person name="Just E."/>
            <person name="Morio T."/>
            <person name="Rost R."/>
            <person name="Churcher C.M."/>
            <person name="Cooper J."/>
            <person name="Haydock S."/>
            <person name="van Driessche N."/>
            <person name="Cronin A."/>
            <person name="Goodhead I."/>
            <person name="Muzny D.M."/>
            <person name="Mourier T."/>
            <person name="Pain A."/>
            <person name="Lu M."/>
            <person name="Harper D."/>
            <person name="Lindsay R."/>
            <person name="Hauser H."/>
            <person name="James K.D."/>
            <person name="Quiles M."/>
            <person name="Madan Babu M."/>
            <person name="Saito T."/>
            <person name="Buchrieser C."/>
            <person name="Wardroper A."/>
            <person name="Felder M."/>
            <person name="Thangavelu M."/>
            <person name="Johnson D."/>
            <person name="Knights A."/>
            <person name="Loulseged H."/>
            <person name="Mungall K.L."/>
            <person name="Oliver K."/>
            <person name="Price C."/>
            <person name="Quail M.A."/>
            <person name="Urushihara H."/>
            <person name="Hernandez J."/>
            <person name="Rabbinowitsch E."/>
            <person name="Steffen D."/>
            <person name="Sanders M."/>
            <person name="Ma J."/>
            <person name="Kohara Y."/>
            <person name="Sharp S."/>
            <person name="Simmonds M.N."/>
            <person name="Spiegler S."/>
            <person name="Tivey A."/>
            <person name="Sugano S."/>
            <person name="White B."/>
            <person name="Walker D."/>
            <person name="Woodward J.R."/>
            <person name="Winckler T."/>
            <person name="Tanaka Y."/>
            <person name="Shaulsky G."/>
            <person name="Schleicher M."/>
            <person name="Weinstock G.M."/>
            <person name="Rosenthal A."/>
            <person name="Cox E.C."/>
            <person name="Chisholm R.L."/>
            <person name="Gibbs R.A."/>
            <person name="Loomis W.F."/>
            <person name="Platzer M."/>
            <person name="Kay R.R."/>
            <person name="Williams J.G."/>
            <person name="Dear P.H."/>
            <person name="Noegel A.A."/>
            <person name="Barrell B.G."/>
            <person name="Kuspa A."/>
        </authorList>
    </citation>
    <scope>NUCLEOTIDE SEQUENCE [LARGE SCALE GENOMIC DNA]</scope>
    <source>
        <strain>AX4</strain>
    </source>
</reference>
<reference key="2">
    <citation type="journal article" date="2009" name="J. Cell Sci.">
        <title>Regulation of Rap1 activity is required for differential adhesion, cell-type patterning and morphogenesis in Dictyostelium.</title>
        <authorList>
            <person name="Parkinson K."/>
            <person name="Bolourani P."/>
            <person name="Traynor D."/>
            <person name="Aldren N.L."/>
            <person name="Kay R.R."/>
            <person name="Weeks G."/>
            <person name="Thompson C.R."/>
        </authorList>
    </citation>
    <scope>FUNCTION</scope>
    <scope>DISRUPTION PHENOTYPE</scope>
    <scope>DEVELOPMENTAL STAGE</scope>
</reference>
<feature type="chain" id="PRO_0000368230" description="RapA guanosine triphosphatase-activating protein B">
    <location>
        <begin position="1"/>
        <end position="418"/>
    </location>
</feature>
<feature type="domain" description="Rap-GAP" evidence="1">
    <location>
        <begin position="142"/>
        <end position="407"/>
    </location>
</feature>
<feature type="region of interest" description="Disordered" evidence="2">
    <location>
        <begin position="304"/>
        <end position="339"/>
    </location>
</feature>
<feature type="compositionally biased region" description="Low complexity" evidence="2">
    <location>
        <begin position="311"/>
        <end position="338"/>
    </location>
</feature>
<evidence type="ECO:0000255" key="1">
    <source>
        <dbReference type="PROSITE-ProRule" id="PRU00165"/>
    </source>
</evidence>
<evidence type="ECO:0000256" key="2">
    <source>
        <dbReference type="SAM" id="MobiDB-lite"/>
    </source>
</evidence>
<evidence type="ECO:0000269" key="3">
    <source>
    </source>
</evidence>
<protein>
    <recommendedName>
        <fullName>RapA guanosine triphosphatase-activating protein B</fullName>
    </recommendedName>
</protein>
<organism>
    <name type="scientific">Dictyostelium discoideum</name>
    <name type="common">Social amoeba</name>
    <dbReference type="NCBI Taxonomy" id="44689"/>
    <lineage>
        <taxon>Eukaryota</taxon>
        <taxon>Amoebozoa</taxon>
        <taxon>Evosea</taxon>
        <taxon>Eumycetozoa</taxon>
        <taxon>Dictyostelia</taxon>
        <taxon>Dictyosteliales</taxon>
        <taxon>Dictyosteliaceae</taxon>
        <taxon>Dictyostelium</taxon>
    </lineage>
</organism>
<keyword id="KW-0343">GTPase activation</keyword>
<keyword id="KW-1185">Reference proteome</keyword>
<dbReference type="EMBL" id="AAFI02000046">
    <property type="protein sequence ID" value="EAL66329.1"/>
    <property type="molecule type" value="Genomic_DNA"/>
</dbReference>
<dbReference type="RefSeq" id="XP_640307.1">
    <property type="nucleotide sequence ID" value="XM_635215.1"/>
</dbReference>
<dbReference type="SMR" id="Q54SS8"/>
<dbReference type="FunCoup" id="Q54SS8">
    <property type="interactions" value="1"/>
</dbReference>
<dbReference type="STRING" id="44689.Q54SS8"/>
<dbReference type="GlyGen" id="Q54SS8">
    <property type="glycosylation" value="1 site"/>
</dbReference>
<dbReference type="PaxDb" id="44689-DDB0233728"/>
<dbReference type="EnsemblProtists" id="EAL66329">
    <property type="protein sequence ID" value="EAL66329"/>
    <property type="gene ID" value="DDB_G0282247"/>
</dbReference>
<dbReference type="GeneID" id="8623483"/>
<dbReference type="KEGG" id="ddi:DDB_G0282247"/>
<dbReference type="dictyBase" id="DDB_G0282247">
    <property type="gene designation" value="rapgapB"/>
</dbReference>
<dbReference type="VEuPathDB" id="AmoebaDB:DDB_G0282247"/>
<dbReference type="eggNOG" id="KOG3686">
    <property type="taxonomic scope" value="Eukaryota"/>
</dbReference>
<dbReference type="HOGENOM" id="CLU_657925_0_0_1"/>
<dbReference type="InParanoid" id="Q54SS8"/>
<dbReference type="OMA" id="ARTWIRY"/>
<dbReference type="PhylomeDB" id="Q54SS8"/>
<dbReference type="Reactome" id="R-DDI-392517">
    <property type="pathway name" value="Rap1 signalling"/>
</dbReference>
<dbReference type="PRO" id="PR:Q54SS8"/>
<dbReference type="Proteomes" id="UP000002195">
    <property type="component" value="Chromosome 3"/>
</dbReference>
<dbReference type="GO" id="GO:0005938">
    <property type="term" value="C:cell cortex"/>
    <property type="evidence" value="ECO:0000314"/>
    <property type="project" value="dictyBase"/>
</dbReference>
<dbReference type="GO" id="GO:0031252">
    <property type="term" value="C:cell leading edge"/>
    <property type="evidence" value="ECO:0000314"/>
    <property type="project" value="dictyBase"/>
</dbReference>
<dbReference type="GO" id="GO:0005737">
    <property type="term" value="C:cytoplasm"/>
    <property type="evidence" value="ECO:0000318"/>
    <property type="project" value="GO_Central"/>
</dbReference>
<dbReference type="GO" id="GO:0030234">
    <property type="term" value="F:enzyme regulator activity"/>
    <property type="evidence" value="ECO:0000314"/>
    <property type="project" value="dictyBase"/>
</dbReference>
<dbReference type="GO" id="GO:0005096">
    <property type="term" value="F:GTPase activator activity"/>
    <property type="evidence" value="ECO:0000315"/>
    <property type="project" value="dictyBase"/>
</dbReference>
<dbReference type="GO" id="GO:0007015">
    <property type="term" value="P:actin filament organization"/>
    <property type="evidence" value="ECO:0000315"/>
    <property type="project" value="dictyBase"/>
</dbReference>
<dbReference type="GO" id="GO:0031589">
    <property type="term" value="P:cell-substrate adhesion"/>
    <property type="evidence" value="ECO:0000315"/>
    <property type="project" value="dictyBase"/>
</dbReference>
<dbReference type="GO" id="GO:0022407">
    <property type="term" value="P:regulation of cell-cell adhesion"/>
    <property type="evidence" value="ECO:0000315"/>
    <property type="project" value="dictyBase"/>
</dbReference>
<dbReference type="GO" id="GO:0043520">
    <property type="term" value="P:regulation of myosin II filament assembly"/>
    <property type="evidence" value="ECO:0000315"/>
    <property type="project" value="dictyBase"/>
</dbReference>
<dbReference type="GO" id="GO:0051056">
    <property type="term" value="P:regulation of small GTPase mediated signal transduction"/>
    <property type="evidence" value="ECO:0007669"/>
    <property type="project" value="InterPro"/>
</dbReference>
<dbReference type="GO" id="GO:0007264">
    <property type="term" value="P:small GTPase-mediated signal transduction"/>
    <property type="evidence" value="ECO:0000315"/>
    <property type="project" value="dictyBase"/>
</dbReference>
<dbReference type="GO" id="GO:0031149">
    <property type="term" value="P:sorocarp stalk cell differentiation"/>
    <property type="evidence" value="ECO:0000314"/>
    <property type="project" value="dictyBase"/>
</dbReference>
<dbReference type="GO" id="GO:0031150">
    <property type="term" value="P:sorocarp stalk development"/>
    <property type="evidence" value="ECO:0000314"/>
    <property type="project" value="dictyBase"/>
</dbReference>
<dbReference type="Gene3D" id="3.40.50.11210">
    <property type="entry name" value="Rap/Ran-GAP"/>
    <property type="match status" value="1"/>
</dbReference>
<dbReference type="InterPro" id="IPR035974">
    <property type="entry name" value="Rap/Ran-GAP_sf"/>
</dbReference>
<dbReference type="InterPro" id="IPR000331">
    <property type="entry name" value="Rap/Ran_GAP_dom"/>
</dbReference>
<dbReference type="InterPro" id="IPR050989">
    <property type="entry name" value="Rap1_Ran_GAP"/>
</dbReference>
<dbReference type="PANTHER" id="PTHR15711">
    <property type="entry name" value="RAP GTPASE-ACTIVATING PROTEIN"/>
    <property type="match status" value="1"/>
</dbReference>
<dbReference type="PANTHER" id="PTHR15711:SF21">
    <property type="entry name" value="RAPA GUANOSINE TRIPHOSPHATASE-ACTIVATING PROTEIN B"/>
    <property type="match status" value="1"/>
</dbReference>
<dbReference type="Pfam" id="PF02145">
    <property type="entry name" value="Rap_GAP"/>
    <property type="match status" value="1"/>
</dbReference>
<dbReference type="SUPFAM" id="SSF111347">
    <property type="entry name" value="Rap/Ran-GAP"/>
    <property type="match status" value="1"/>
</dbReference>
<dbReference type="PROSITE" id="PS50085">
    <property type="entry name" value="RAPGAP"/>
    <property type="match status" value="1"/>
</dbReference>
<sequence length="418" mass="46889">MFSHCEGYRIEGGVTDGETNWNNNFNQNNNNNDNNKVMASIYKQQFYGKPHKTFMSLSSPNGPILVCIKKVGNSSDDFYLLVCTEKGFEEVRANKDSLQKSKTTRSFLKMRPTSLNVITSVRPELTKVPLCKVTDKSIQEELVKVCEPEFNKVIKSALLYCKESQRDDNDMLKNISSNVSQEYNDFLNFLGEKVELKDFSKFNGGLDIKNNSHGTHSIYSQINDVEVMYHVATMLPFFPSDPKQSERRKLISLDRVVIIFNDGSKPMSPNCIKSKSTQIIILIQPIKNFVGNSKTTIGISNDENRVVGEQPSPSLTTTTTTTTTTSPTINSNSPTPSNKIKYRVSISNRDEVPNYGPPLPDPPIFEKDDSFRNFLYQKMVGGAASLRNTPAFTSKNSEKASALINVISKYSTKGMEQI</sequence>